<keyword id="KW-0066">ATP synthesis</keyword>
<keyword id="KW-0375">Hydrogen ion transport</keyword>
<keyword id="KW-0406">Ion transport</keyword>
<keyword id="KW-1185">Reference proteome</keyword>
<keyword id="KW-0813">Transport</keyword>
<gene>
    <name evidence="1" type="primary">atpB</name>
    <name type="ordered locus">Anae109_2563</name>
</gene>
<reference key="1">
    <citation type="journal article" date="2015" name="Genome Announc.">
        <title>Complete genome sequence of Anaeromyxobacter sp. Fw109-5, an anaerobic, metal-reducing bacterium isolated from a contaminated subsurface environment.</title>
        <authorList>
            <person name="Hwang C."/>
            <person name="Copeland A."/>
            <person name="Lucas S."/>
            <person name="Lapidus A."/>
            <person name="Barry K."/>
            <person name="Glavina Del Rio T."/>
            <person name="Dalin E."/>
            <person name="Tice H."/>
            <person name="Pitluck S."/>
            <person name="Sims D."/>
            <person name="Brettin T."/>
            <person name="Bruce D.C."/>
            <person name="Detter J.C."/>
            <person name="Han C.S."/>
            <person name="Schmutz J."/>
            <person name="Larimer F.W."/>
            <person name="Land M.L."/>
            <person name="Hauser L.J."/>
            <person name="Kyrpides N."/>
            <person name="Lykidis A."/>
            <person name="Richardson P."/>
            <person name="Belieav A."/>
            <person name="Sanford R.A."/>
            <person name="Loeffler F.E."/>
            <person name="Fields M.W."/>
        </authorList>
    </citation>
    <scope>NUCLEOTIDE SEQUENCE [LARGE SCALE GENOMIC DNA]</scope>
    <source>
        <strain>Fw109-5</strain>
    </source>
</reference>
<organism>
    <name type="scientific">Anaeromyxobacter sp. (strain Fw109-5)</name>
    <dbReference type="NCBI Taxonomy" id="404589"/>
    <lineage>
        <taxon>Bacteria</taxon>
        <taxon>Pseudomonadati</taxon>
        <taxon>Myxococcota</taxon>
        <taxon>Myxococcia</taxon>
        <taxon>Myxococcales</taxon>
        <taxon>Cystobacterineae</taxon>
        <taxon>Anaeromyxobacteraceae</taxon>
        <taxon>Anaeromyxobacter</taxon>
    </lineage>
</organism>
<proteinExistence type="inferred from homology"/>
<protein>
    <recommendedName>
        <fullName evidence="1">V-type ATP synthase beta chain</fullName>
    </recommendedName>
    <alternativeName>
        <fullName evidence="1">V-ATPase subunit B</fullName>
    </alternativeName>
</protein>
<feature type="chain" id="PRO_1000059364" description="V-type ATP synthase beta chain">
    <location>
        <begin position="1"/>
        <end position="460"/>
    </location>
</feature>
<evidence type="ECO:0000255" key="1">
    <source>
        <dbReference type="HAMAP-Rule" id="MF_00310"/>
    </source>
</evidence>
<accession>A7HDG8</accession>
<name>VATB_ANADF</name>
<sequence length="460" mass="50069">MDLVTRRVRGADAIAGPLLFLEGVPRARLGELVRIRMAGGEERRGQIIELSGARVAVQVLEETRGLAPARAEVTLTGEVATLAVSRGMLGRVLDGLGRPTDGLPAPIAEARLPIHGAALNVTRREKPADFIETGVSAIDGLNTLVRGQKLPVFSCAGLPAGRLAGQIVCQARVRGGERFAVVFAAMGAPFREYDAYLEAFRRAGVLDRTAVFLNRAEDPPIERLMTPRCALTCAEHLAFSHGLHVLVVLTDMTSYCEALREVALARDEVPGRRGYPGYMYTDLATIYERAGRIAGRPGSITQVPVLTMPDDDLTHPIPDLSGYITEGQIVLSRELDRRGVYPPIDVLPSLSRLMGLGAGPGRTRADHRPLADQLYALYARGRDVRRMAAIVGSANLGEEERRLLEFGDRFERELVGQGDAFRSIEDTLETGWRLLAQLPPEALARIPAAVLEARRKEGQR</sequence>
<comment type="function">
    <text evidence="1">Produces ATP from ADP in the presence of a proton gradient across the membrane. The V-type beta chain is a regulatory subunit.</text>
</comment>
<comment type="similarity">
    <text evidence="1">Belongs to the ATPase alpha/beta chains family.</text>
</comment>
<dbReference type="EMBL" id="CP000769">
    <property type="protein sequence ID" value="ABS26764.1"/>
    <property type="molecule type" value="Genomic_DNA"/>
</dbReference>
<dbReference type="RefSeq" id="WP_012097358.1">
    <property type="nucleotide sequence ID" value="NC_009675.1"/>
</dbReference>
<dbReference type="SMR" id="A7HDG8"/>
<dbReference type="STRING" id="404589.Anae109_2563"/>
<dbReference type="KEGG" id="afw:Anae109_2563"/>
<dbReference type="eggNOG" id="COG1156">
    <property type="taxonomic scope" value="Bacteria"/>
</dbReference>
<dbReference type="HOGENOM" id="CLU_022916_0_0_7"/>
<dbReference type="OrthoDB" id="9801639at2"/>
<dbReference type="Proteomes" id="UP000006382">
    <property type="component" value="Chromosome"/>
</dbReference>
<dbReference type="GO" id="GO:0005524">
    <property type="term" value="F:ATP binding"/>
    <property type="evidence" value="ECO:0007669"/>
    <property type="project" value="UniProtKB-UniRule"/>
</dbReference>
<dbReference type="GO" id="GO:0046933">
    <property type="term" value="F:proton-transporting ATP synthase activity, rotational mechanism"/>
    <property type="evidence" value="ECO:0007669"/>
    <property type="project" value="UniProtKB-UniRule"/>
</dbReference>
<dbReference type="GO" id="GO:0042777">
    <property type="term" value="P:proton motive force-driven plasma membrane ATP synthesis"/>
    <property type="evidence" value="ECO:0007669"/>
    <property type="project" value="UniProtKB-UniRule"/>
</dbReference>
<dbReference type="CDD" id="cd18118">
    <property type="entry name" value="ATP-synt_V_A-type_beta_N"/>
    <property type="match status" value="1"/>
</dbReference>
<dbReference type="CDD" id="cd01135">
    <property type="entry name" value="V_A-ATPase_B"/>
    <property type="match status" value="1"/>
</dbReference>
<dbReference type="Gene3D" id="3.40.50.12240">
    <property type="match status" value="1"/>
</dbReference>
<dbReference type="HAMAP" id="MF_00310">
    <property type="entry name" value="ATP_synth_B_arch"/>
    <property type="match status" value="1"/>
</dbReference>
<dbReference type="InterPro" id="IPR055190">
    <property type="entry name" value="ATP-synt_VA_C"/>
</dbReference>
<dbReference type="InterPro" id="IPR020003">
    <property type="entry name" value="ATPase_a/bsu_AS"/>
</dbReference>
<dbReference type="InterPro" id="IPR004100">
    <property type="entry name" value="ATPase_F1/V1/A1_a/bsu_N"/>
</dbReference>
<dbReference type="InterPro" id="IPR000194">
    <property type="entry name" value="ATPase_F1/V1/A1_a/bsu_nucl-bd"/>
</dbReference>
<dbReference type="InterPro" id="IPR027417">
    <property type="entry name" value="P-loop_NTPase"/>
</dbReference>
<dbReference type="InterPro" id="IPR022879">
    <property type="entry name" value="V-ATPase_su_B/beta"/>
</dbReference>
<dbReference type="NCBIfam" id="NF003235">
    <property type="entry name" value="PRK04196.1"/>
    <property type="match status" value="1"/>
</dbReference>
<dbReference type="PANTHER" id="PTHR43389">
    <property type="entry name" value="V-TYPE PROTON ATPASE SUBUNIT B"/>
    <property type="match status" value="1"/>
</dbReference>
<dbReference type="PANTHER" id="PTHR43389:SF4">
    <property type="entry name" value="V-TYPE PROTON ATPASE SUBUNIT B"/>
    <property type="match status" value="1"/>
</dbReference>
<dbReference type="Pfam" id="PF00006">
    <property type="entry name" value="ATP-synt_ab"/>
    <property type="match status" value="1"/>
</dbReference>
<dbReference type="Pfam" id="PF02874">
    <property type="entry name" value="ATP-synt_ab_N"/>
    <property type="match status" value="1"/>
</dbReference>
<dbReference type="Pfam" id="PF22919">
    <property type="entry name" value="ATP-synt_VA_C"/>
    <property type="match status" value="1"/>
</dbReference>
<dbReference type="SUPFAM" id="SSF52540">
    <property type="entry name" value="P-loop containing nucleoside triphosphate hydrolases"/>
    <property type="match status" value="1"/>
</dbReference>
<dbReference type="PROSITE" id="PS00152">
    <property type="entry name" value="ATPASE_ALPHA_BETA"/>
    <property type="match status" value="1"/>
</dbReference>